<reference key="1">
    <citation type="journal article" date="1997" name="Fish Physiol. Biochem.">
        <title>Molecular cloning of a cDNA encoding proglucagon from goldfish, Carassius auratus.</title>
        <authorList>
            <person name="Yuen T.T.H."/>
            <person name="Mok P.Y."/>
            <person name="Chow B.K.C."/>
        </authorList>
    </citation>
    <scope>NUCLEOTIDE SEQUENCE [MRNA]</scope>
</reference>
<gene>
    <name type="primary">gcg</name>
</gene>
<comment type="function">
    <molecule>Glucagon</molecule>
    <text evidence="2">Plays a key role in glucose metabolism and homeostasis. Regulates blood glucose by increasing gluconeogenesis and decreasing glycolysis.</text>
</comment>
<comment type="subcellular location">
    <subcellularLocation>
        <location>Secreted</location>
    </subcellularLocation>
</comment>
<comment type="similarity">
    <text evidence="5">Belongs to the glucagon family.</text>
</comment>
<proteinExistence type="evidence at transcript level"/>
<accession>P79695</accession>
<name>GLUC_CARAU</name>
<feature type="signal peptide" evidence="4">
    <location>
        <begin position="1"/>
        <end position="21"/>
    </location>
</feature>
<feature type="peptide" id="PRO_0000011334" description="Glicentin-related polypeptide" evidence="3">
    <location>
        <begin position="22"/>
        <end position="47"/>
    </location>
</feature>
<feature type="peptide" id="PRO_0000011335" description="Glucagon" evidence="2">
    <location>
        <begin position="50"/>
        <end position="78"/>
    </location>
</feature>
<feature type="propeptide" id="PRO_0000011336" evidence="2">
    <location>
        <begin position="80"/>
        <end position="85"/>
    </location>
</feature>
<feature type="peptide" id="PRO_0000011337" description="Glucagon-like peptide" evidence="2">
    <location>
        <begin position="88"/>
        <end position="121"/>
    </location>
</feature>
<feature type="site" description="Cleavage; by PCSK2" evidence="1">
    <location>
        <begin position="49"/>
        <end position="50"/>
    </location>
</feature>
<feature type="site" description="Cleavage; by PCSK1" evidence="1">
    <location>
        <begin position="87"/>
        <end position="88"/>
    </location>
</feature>
<dbReference type="EMBL" id="U65528">
    <property type="protein sequence ID" value="AAB39563.1"/>
    <property type="molecule type" value="mRNA"/>
</dbReference>
<dbReference type="SMR" id="P79695"/>
<dbReference type="Proteomes" id="UP000515129">
    <property type="component" value="Unplaced"/>
</dbReference>
<dbReference type="GO" id="GO:0005576">
    <property type="term" value="C:extracellular region"/>
    <property type="evidence" value="ECO:0007669"/>
    <property type="project" value="UniProtKB-SubCell"/>
</dbReference>
<dbReference type="GO" id="GO:0031769">
    <property type="term" value="F:glucagon receptor binding"/>
    <property type="evidence" value="ECO:0007669"/>
    <property type="project" value="TreeGrafter"/>
</dbReference>
<dbReference type="GO" id="GO:0005179">
    <property type="term" value="F:hormone activity"/>
    <property type="evidence" value="ECO:0007669"/>
    <property type="project" value="UniProtKB-KW"/>
</dbReference>
<dbReference type="GO" id="GO:0042594">
    <property type="term" value="P:response to starvation"/>
    <property type="evidence" value="ECO:0007669"/>
    <property type="project" value="TreeGrafter"/>
</dbReference>
<dbReference type="Gene3D" id="6.10.250.590">
    <property type="match status" value="2"/>
</dbReference>
<dbReference type="InterPro" id="IPR015550">
    <property type="entry name" value="Glucagon"/>
</dbReference>
<dbReference type="InterPro" id="IPR000532">
    <property type="entry name" value="Glucagon_GIP_secretin_VIP"/>
</dbReference>
<dbReference type="PANTHER" id="PTHR11418">
    <property type="entry name" value="GLUCAGON"/>
    <property type="match status" value="1"/>
</dbReference>
<dbReference type="PANTHER" id="PTHR11418:SF0">
    <property type="entry name" value="PRO-GLUCAGON"/>
    <property type="match status" value="1"/>
</dbReference>
<dbReference type="Pfam" id="PF00123">
    <property type="entry name" value="Hormone_2"/>
    <property type="match status" value="2"/>
</dbReference>
<dbReference type="PRINTS" id="PR00275">
    <property type="entry name" value="GLUCAGON"/>
</dbReference>
<dbReference type="SMART" id="SM00070">
    <property type="entry name" value="GLUCA"/>
    <property type="match status" value="2"/>
</dbReference>
<dbReference type="PROSITE" id="PS00260">
    <property type="entry name" value="GLUCAGON"/>
    <property type="match status" value="2"/>
</dbReference>
<sequence length="121" mass="13527">MKGAQYLAGLLLLLFVQNSICVPLQDYHTSTETVEGLLARGQGFTTAKRHSEGTFSNDYSKYLETRRAQDFVEWLMNSKSNGGSAKRHAEGTYTSDISSFLRDQAAQNFVAWLKSGQPKQE</sequence>
<evidence type="ECO:0000250" key="1"/>
<evidence type="ECO:0000250" key="2">
    <source>
        <dbReference type="UniProtKB" id="P01275"/>
    </source>
</evidence>
<evidence type="ECO:0000250" key="3">
    <source>
        <dbReference type="UniProtKB" id="P09686"/>
    </source>
</evidence>
<evidence type="ECO:0000255" key="4"/>
<evidence type="ECO:0000305" key="5"/>
<protein>
    <recommendedName>
        <fullName>Pro-glucagon</fullName>
    </recommendedName>
    <component>
        <recommendedName>
            <fullName>Glicentin-related polypeptide</fullName>
            <shortName>GRPP</shortName>
        </recommendedName>
    </component>
    <component>
        <recommendedName>
            <fullName>Glucagon</fullName>
        </recommendedName>
    </component>
    <component>
        <recommendedName>
            <fullName>Glucagon-like peptide</fullName>
        </recommendedName>
    </component>
</protein>
<keyword id="KW-0165">Cleavage on pair of basic residues</keyword>
<keyword id="KW-0372">Hormone</keyword>
<keyword id="KW-1185">Reference proteome</keyword>
<keyword id="KW-0964">Secreted</keyword>
<keyword id="KW-0732">Signal</keyword>
<organism>
    <name type="scientific">Carassius auratus</name>
    <name type="common">Goldfish</name>
    <dbReference type="NCBI Taxonomy" id="7957"/>
    <lineage>
        <taxon>Eukaryota</taxon>
        <taxon>Metazoa</taxon>
        <taxon>Chordata</taxon>
        <taxon>Craniata</taxon>
        <taxon>Vertebrata</taxon>
        <taxon>Euteleostomi</taxon>
        <taxon>Actinopterygii</taxon>
        <taxon>Neopterygii</taxon>
        <taxon>Teleostei</taxon>
        <taxon>Ostariophysi</taxon>
        <taxon>Cypriniformes</taxon>
        <taxon>Cyprinidae</taxon>
        <taxon>Cyprininae</taxon>
        <taxon>Carassius</taxon>
    </lineage>
</organism>